<keyword id="KW-0067">ATP-binding</keyword>
<keyword id="KW-0997">Cell inner membrane</keyword>
<keyword id="KW-1003">Cell membrane</keyword>
<keyword id="KW-0472">Membrane</keyword>
<keyword id="KW-0547">Nucleotide-binding</keyword>
<keyword id="KW-1278">Translocase</keyword>
<keyword id="KW-0813">Transport</keyword>
<evidence type="ECO:0000255" key="1">
    <source>
        <dbReference type="HAMAP-Rule" id="MF_01708"/>
    </source>
</evidence>
<organism>
    <name type="scientific">Vibrio vulnificus (strain CMCP6)</name>
    <dbReference type="NCBI Taxonomy" id="216895"/>
    <lineage>
        <taxon>Bacteria</taxon>
        <taxon>Pseudomonadati</taxon>
        <taxon>Pseudomonadota</taxon>
        <taxon>Gammaproteobacteria</taxon>
        <taxon>Vibrionales</taxon>
        <taxon>Vibrionaceae</taxon>
        <taxon>Vibrio</taxon>
    </lineage>
</organism>
<dbReference type="EC" id="7.6.2.-" evidence="1"/>
<dbReference type="EMBL" id="AE016795">
    <property type="protein sequence ID" value="AAO10469.1"/>
    <property type="molecule type" value="Genomic_DNA"/>
</dbReference>
<dbReference type="RefSeq" id="WP_011079967.1">
    <property type="nucleotide sequence ID" value="NC_004459.3"/>
</dbReference>
<dbReference type="SMR" id="Q8DAV6"/>
<dbReference type="KEGG" id="vvu:VV1_2081"/>
<dbReference type="HOGENOM" id="CLU_000604_1_22_6"/>
<dbReference type="Proteomes" id="UP000002275">
    <property type="component" value="Chromosome 1"/>
</dbReference>
<dbReference type="GO" id="GO:0005886">
    <property type="term" value="C:plasma membrane"/>
    <property type="evidence" value="ECO:0007669"/>
    <property type="project" value="UniProtKB-SubCell"/>
</dbReference>
<dbReference type="GO" id="GO:0005524">
    <property type="term" value="F:ATP binding"/>
    <property type="evidence" value="ECO:0007669"/>
    <property type="project" value="UniProtKB-KW"/>
</dbReference>
<dbReference type="GO" id="GO:0016887">
    <property type="term" value="F:ATP hydrolysis activity"/>
    <property type="evidence" value="ECO:0007669"/>
    <property type="project" value="InterPro"/>
</dbReference>
<dbReference type="GO" id="GO:0044873">
    <property type="term" value="P:lipoprotein localization to membrane"/>
    <property type="evidence" value="ECO:0007669"/>
    <property type="project" value="InterPro"/>
</dbReference>
<dbReference type="CDD" id="cd03255">
    <property type="entry name" value="ABC_MJ0796_LolCDE_FtsE"/>
    <property type="match status" value="1"/>
</dbReference>
<dbReference type="FunFam" id="3.40.50.300:FF:000230">
    <property type="entry name" value="Lipoprotein-releasing system ATP-binding protein LolD"/>
    <property type="match status" value="1"/>
</dbReference>
<dbReference type="Gene3D" id="3.40.50.300">
    <property type="entry name" value="P-loop containing nucleotide triphosphate hydrolases"/>
    <property type="match status" value="1"/>
</dbReference>
<dbReference type="InterPro" id="IPR003593">
    <property type="entry name" value="AAA+_ATPase"/>
</dbReference>
<dbReference type="InterPro" id="IPR003439">
    <property type="entry name" value="ABC_transporter-like_ATP-bd"/>
</dbReference>
<dbReference type="InterPro" id="IPR017871">
    <property type="entry name" value="ABC_transporter-like_CS"/>
</dbReference>
<dbReference type="InterPro" id="IPR011924">
    <property type="entry name" value="LolD_lipo_ATP-bd"/>
</dbReference>
<dbReference type="InterPro" id="IPR017911">
    <property type="entry name" value="MacB-like_ATP-bd"/>
</dbReference>
<dbReference type="InterPro" id="IPR027417">
    <property type="entry name" value="P-loop_NTPase"/>
</dbReference>
<dbReference type="NCBIfam" id="TIGR02211">
    <property type="entry name" value="LolD_lipo_ex"/>
    <property type="match status" value="1"/>
</dbReference>
<dbReference type="PANTHER" id="PTHR42798:SF2">
    <property type="entry name" value="ABC TRANSPORTER ATP-BINDING PROTEIN MG467-RELATED"/>
    <property type="match status" value="1"/>
</dbReference>
<dbReference type="PANTHER" id="PTHR42798">
    <property type="entry name" value="LIPOPROTEIN-RELEASING SYSTEM ATP-BINDING PROTEIN LOLD"/>
    <property type="match status" value="1"/>
</dbReference>
<dbReference type="Pfam" id="PF00005">
    <property type="entry name" value="ABC_tran"/>
    <property type="match status" value="1"/>
</dbReference>
<dbReference type="SMART" id="SM00382">
    <property type="entry name" value="AAA"/>
    <property type="match status" value="1"/>
</dbReference>
<dbReference type="SUPFAM" id="SSF52540">
    <property type="entry name" value="P-loop containing nucleoside triphosphate hydrolases"/>
    <property type="match status" value="1"/>
</dbReference>
<dbReference type="PROSITE" id="PS00211">
    <property type="entry name" value="ABC_TRANSPORTER_1"/>
    <property type="match status" value="1"/>
</dbReference>
<dbReference type="PROSITE" id="PS50893">
    <property type="entry name" value="ABC_TRANSPORTER_2"/>
    <property type="match status" value="1"/>
</dbReference>
<dbReference type="PROSITE" id="PS51244">
    <property type="entry name" value="LOLD"/>
    <property type="match status" value="1"/>
</dbReference>
<protein>
    <recommendedName>
        <fullName evidence="1">Lipoprotein-releasing system ATP-binding protein LolD</fullName>
        <ecNumber evidence="1">7.6.2.-</ecNumber>
    </recommendedName>
</protein>
<accession>Q8DAV6</accession>
<feature type="chain" id="PRO_0000092465" description="Lipoprotein-releasing system ATP-binding protein LolD">
    <location>
        <begin position="1"/>
        <end position="227"/>
    </location>
</feature>
<feature type="domain" description="ABC transporter" evidence="1">
    <location>
        <begin position="5"/>
        <end position="227"/>
    </location>
</feature>
<feature type="binding site" evidence="1">
    <location>
        <begin position="41"/>
        <end position="48"/>
    </location>
    <ligand>
        <name>ATP</name>
        <dbReference type="ChEBI" id="CHEBI:30616"/>
    </ligand>
</feature>
<comment type="function">
    <text evidence="1">Part of the ABC transporter complex LolCDE involved in the translocation of mature outer membrane-directed lipoproteins, from the inner membrane to the periplasmic chaperone, LolA. Responsible for the formation of the LolA-lipoprotein complex in an ATP-dependent manner.</text>
</comment>
<comment type="subunit">
    <text evidence="1">The complex is composed of two ATP-binding proteins (LolD) and two transmembrane proteins (LolC and LolE).</text>
</comment>
<comment type="subcellular location">
    <subcellularLocation>
        <location evidence="1">Cell inner membrane</location>
        <topology evidence="1">Peripheral membrane protein</topology>
    </subcellularLocation>
</comment>
<comment type="similarity">
    <text evidence="1">Belongs to the ABC transporter superfamily. Lipoprotein translocase (TC 3.A.1.125) family.</text>
</comment>
<name>LOLD_VIBVU</name>
<gene>
    <name evidence="1" type="primary">lolD</name>
    <name type="ordered locus">VV1_2081</name>
</gene>
<sequence>MNKLLQCHQVSKIYREGEFETEVLKGVDFELEQGELVAIVGTSGSGKSTLLHILGALDDATHGEVAFLDYQLSALSGNKQAQVRNQHLGFIYQFHHLLADFTAVENVAMPLLIGGKSPKQAKLAAEALLEKVGLQHRMHHRPSELSGGERQRVAIARALVNKPALVLADEPTGNLDHKTALQIYDLMRELNRESGTAFLVVTHDNELAAKMDRILYMQDGVLASDNR</sequence>
<reference key="1">
    <citation type="submission" date="2002-12" db="EMBL/GenBank/DDBJ databases">
        <title>Complete genome sequence of Vibrio vulnificus CMCP6.</title>
        <authorList>
            <person name="Rhee J.H."/>
            <person name="Kim S.Y."/>
            <person name="Chung S.S."/>
            <person name="Kim J.J."/>
            <person name="Moon Y.H."/>
            <person name="Jeong H."/>
            <person name="Choy H.E."/>
        </authorList>
    </citation>
    <scope>NUCLEOTIDE SEQUENCE [LARGE SCALE GENOMIC DNA]</scope>
    <source>
        <strain>CMCP6</strain>
    </source>
</reference>
<proteinExistence type="inferred from homology"/>